<dbReference type="EMBL" id="AE017285">
    <property type="protein sequence ID" value="AAS95293.1"/>
    <property type="molecule type" value="Genomic_DNA"/>
</dbReference>
<dbReference type="RefSeq" id="WP_010938114.1">
    <property type="nucleotide sequence ID" value="NC_002937.3"/>
</dbReference>
<dbReference type="RefSeq" id="YP_010034.1">
    <property type="nucleotide sequence ID" value="NC_002937.3"/>
</dbReference>
<dbReference type="SMR" id="Q72DW6"/>
<dbReference type="STRING" id="882.DVU_0813"/>
<dbReference type="PaxDb" id="882-DVU_0813"/>
<dbReference type="EnsemblBacteria" id="AAS95293">
    <property type="protein sequence ID" value="AAS95293"/>
    <property type="gene ID" value="DVU_0813"/>
</dbReference>
<dbReference type="KEGG" id="dvu:DVU_0813"/>
<dbReference type="PATRIC" id="fig|882.5.peg.763"/>
<dbReference type="eggNOG" id="COG1420">
    <property type="taxonomic scope" value="Bacteria"/>
</dbReference>
<dbReference type="HOGENOM" id="CLU_050019_0_0_7"/>
<dbReference type="OrthoDB" id="9783139at2"/>
<dbReference type="PhylomeDB" id="Q72DW6"/>
<dbReference type="Proteomes" id="UP000002194">
    <property type="component" value="Chromosome"/>
</dbReference>
<dbReference type="GO" id="GO:0003677">
    <property type="term" value="F:DNA binding"/>
    <property type="evidence" value="ECO:0007669"/>
    <property type="project" value="InterPro"/>
</dbReference>
<dbReference type="GO" id="GO:0045892">
    <property type="term" value="P:negative regulation of DNA-templated transcription"/>
    <property type="evidence" value="ECO:0007669"/>
    <property type="project" value="UniProtKB-UniRule"/>
</dbReference>
<dbReference type="Gene3D" id="3.30.450.40">
    <property type="match status" value="1"/>
</dbReference>
<dbReference type="Gene3D" id="1.10.10.10">
    <property type="entry name" value="Winged helix-like DNA-binding domain superfamily/Winged helix DNA-binding domain"/>
    <property type="match status" value="1"/>
</dbReference>
<dbReference type="HAMAP" id="MF_00081">
    <property type="entry name" value="HrcA"/>
    <property type="match status" value="1"/>
</dbReference>
<dbReference type="InterPro" id="IPR029016">
    <property type="entry name" value="GAF-like_dom_sf"/>
</dbReference>
<dbReference type="InterPro" id="IPR002571">
    <property type="entry name" value="HrcA"/>
</dbReference>
<dbReference type="InterPro" id="IPR021153">
    <property type="entry name" value="HrcA_C"/>
</dbReference>
<dbReference type="InterPro" id="IPR036388">
    <property type="entry name" value="WH-like_DNA-bd_sf"/>
</dbReference>
<dbReference type="InterPro" id="IPR036390">
    <property type="entry name" value="WH_DNA-bd_sf"/>
</dbReference>
<dbReference type="NCBIfam" id="TIGR00331">
    <property type="entry name" value="hrcA"/>
    <property type="match status" value="1"/>
</dbReference>
<dbReference type="PANTHER" id="PTHR34824">
    <property type="entry name" value="HEAT-INDUCIBLE TRANSCRIPTION REPRESSOR HRCA"/>
    <property type="match status" value="1"/>
</dbReference>
<dbReference type="PANTHER" id="PTHR34824:SF1">
    <property type="entry name" value="HEAT-INDUCIBLE TRANSCRIPTION REPRESSOR HRCA"/>
    <property type="match status" value="1"/>
</dbReference>
<dbReference type="Pfam" id="PF01628">
    <property type="entry name" value="HrcA"/>
    <property type="match status" value="1"/>
</dbReference>
<dbReference type="PIRSF" id="PIRSF005485">
    <property type="entry name" value="HrcA"/>
    <property type="match status" value="1"/>
</dbReference>
<dbReference type="SUPFAM" id="SSF55781">
    <property type="entry name" value="GAF domain-like"/>
    <property type="match status" value="1"/>
</dbReference>
<dbReference type="SUPFAM" id="SSF46785">
    <property type="entry name" value="Winged helix' DNA-binding domain"/>
    <property type="match status" value="1"/>
</dbReference>
<evidence type="ECO:0000255" key="1">
    <source>
        <dbReference type="HAMAP-Rule" id="MF_00081"/>
    </source>
</evidence>
<name>HRCA_NITV2</name>
<keyword id="KW-1185">Reference proteome</keyword>
<keyword id="KW-0678">Repressor</keyword>
<keyword id="KW-0346">Stress response</keyword>
<keyword id="KW-0804">Transcription</keyword>
<keyword id="KW-0805">Transcription regulation</keyword>
<protein>
    <recommendedName>
        <fullName evidence="1">Heat-inducible transcription repressor HrcA</fullName>
    </recommendedName>
</protein>
<sequence length="355" mass="38550">MSALGSRETHVLTTIIESYITSAAPVGSRTVSRRSGLALSPASMRNTMSDLTDMGFLEQPHTSAGRIPTPKAFRLYVDALLRQSARRDEAPLHMVEALHGHEPEVGALLRRASNLVSEHARQVSMVLAPGPAEARLRSLDFVPAGEGLVLAVLVLEGGMVRTRLVRDDTHFGSDELVRFGNYINAHYRGHTLSGIRNSIHHELSGGGAQLEAMCAQALALGSLALDSIDDDRELYVNGTRNILDQAEFAELGRMRELMDALEERSRLLELLDRTILEDDVHVTFYPDDVSGGAQRRAPDGLRGCSMVSAPYGGASPLGVIGVIGPVRMDYRKVLPLVGAVSRVLTQLLRERFATG</sequence>
<organism>
    <name type="scientific">Nitratidesulfovibrio vulgaris (strain ATCC 29579 / DSM 644 / CCUG 34227 / NCIMB 8303 / VKM B-1760 / Hildenborough)</name>
    <name type="common">Desulfovibrio vulgaris</name>
    <dbReference type="NCBI Taxonomy" id="882"/>
    <lineage>
        <taxon>Bacteria</taxon>
        <taxon>Pseudomonadati</taxon>
        <taxon>Thermodesulfobacteriota</taxon>
        <taxon>Desulfovibrionia</taxon>
        <taxon>Desulfovibrionales</taxon>
        <taxon>Desulfovibrionaceae</taxon>
        <taxon>Nitratidesulfovibrio</taxon>
    </lineage>
</organism>
<accession>Q72DW6</accession>
<gene>
    <name evidence="1" type="primary">hrcA</name>
    <name type="ordered locus">DVU_0813</name>
</gene>
<reference key="1">
    <citation type="journal article" date="2004" name="Nat. Biotechnol.">
        <title>The genome sequence of the anaerobic, sulfate-reducing bacterium Desulfovibrio vulgaris Hildenborough.</title>
        <authorList>
            <person name="Heidelberg J.F."/>
            <person name="Seshadri R."/>
            <person name="Haveman S.A."/>
            <person name="Hemme C.L."/>
            <person name="Paulsen I.T."/>
            <person name="Kolonay J.F."/>
            <person name="Eisen J.A."/>
            <person name="Ward N.L."/>
            <person name="Methe B.A."/>
            <person name="Brinkac L.M."/>
            <person name="Daugherty S.C."/>
            <person name="DeBoy R.T."/>
            <person name="Dodson R.J."/>
            <person name="Durkin A.S."/>
            <person name="Madupu R."/>
            <person name="Nelson W.C."/>
            <person name="Sullivan S.A."/>
            <person name="Fouts D.E."/>
            <person name="Haft D.H."/>
            <person name="Selengut J."/>
            <person name="Peterson J.D."/>
            <person name="Davidsen T.M."/>
            <person name="Zafar N."/>
            <person name="Zhou L."/>
            <person name="Radune D."/>
            <person name="Dimitrov G."/>
            <person name="Hance M."/>
            <person name="Tran K."/>
            <person name="Khouri H.M."/>
            <person name="Gill J."/>
            <person name="Utterback T.R."/>
            <person name="Feldblyum T.V."/>
            <person name="Wall J.D."/>
            <person name="Voordouw G."/>
            <person name="Fraser C.M."/>
        </authorList>
    </citation>
    <scope>NUCLEOTIDE SEQUENCE [LARGE SCALE GENOMIC DNA]</scope>
    <source>
        <strain>ATCC 29579 / DSM 644 / CCUG 34227 / NCIMB 8303 / VKM B-1760 / Hildenborough</strain>
    </source>
</reference>
<comment type="function">
    <text evidence="1">Negative regulator of class I heat shock genes (grpE-dnaK-dnaJ and groELS operons). Prevents heat-shock induction of these operons.</text>
</comment>
<comment type="similarity">
    <text evidence="1">Belongs to the HrcA family.</text>
</comment>
<proteinExistence type="inferred from homology"/>
<feature type="chain" id="PRO_0000182477" description="Heat-inducible transcription repressor HrcA">
    <location>
        <begin position="1"/>
        <end position="355"/>
    </location>
</feature>